<name>RL30_NEUCR</name>
<reference key="1">
    <citation type="journal article" date="2003" name="Nature">
        <title>The genome sequence of the filamentous fungus Neurospora crassa.</title>
        <authorList>
            <person name="Galagan J.E."/>
            <person name="Calvo S.E."/>
            <person name="Borkovich K.A."/>
            <person name="Selker E.U."/>
            <person name="Read N.D."/>
            <person name="Jaffe D.B."/>
            <person name="FitzHugh W."/>
            <person name="Ma L.-J."/>
            <person name="Smirnov S."/>
            <person name="Purcell S."/>
            <person name="Rehman B."/>
            <person name="Elkins T."/>
            <person name="Engels R."/>
            <person name="Wang S."/>
            <person name="Nielsen C.B."/>
            <person name="Butler J."/>
            <person name="Endrizzi M."/>
            <person name="Qui D."/>
            <person name="Ianakiev P."/>
            <person name="Bell-Pedersen D."/>
            <person name="Nelson M.A."/>
            <person name="Werner-Washburne M."/>
            <person name="Selitrennikoff C.P."/>
            <person name="Kinsey J.A."/>
            <person name="Braun E.L."/>
            <person name="Zelter A."/>
            <person name="Schulte U."/>
            <person name="Kothe G.O."/>
            <person name="Jedd G."/>
            <person name="Mewes H.-W."/>
            <person name="Staben C."/>
            <person name="Marcotte E."/>
            <person name="Greenberg D."/>
            <person name="Roy A."/>
            <person name="Foley K."/>
            <person name="Naylor J."/>
            <person name="Stange-Thomann N."/>
            <person name="Barrett R."/>
            <person name="Gnerre S."/>
            <person name="Kamal M."/>
            <person name="Kamvysselis M."/>
            <person name="Mauceli E.W."/>
            <person name="Bielke C."/>
            <person name="Rudd S."/>
            <person name="Frishman D."/>
            <person name="Krystofova S."/>
            <person name="Rasmussen C."/>
            <person name="Metzenberg R.L."/>
            <person name="Perkins D.D."/>
            <person name="Kroken S."/>
            <person name="Cogoni C."/>
            <person name="Macino G."/>
            <person name="Catcheside D.E.A."/>
            <person name="Li W."/>
            <person name="Pratt R.J."/>
            <person name="Osmani S.A."/>
            <person name="DeSouza C.P.C."/>
            <person name="Glass N.L."/>
            <person name="Orbach M.J."/>
            <person name="Berglund J.A."/>
            <person name="Voelker R."/>
            <person name="Yarden O."/>
            <person name="Plamann M."/>
            <person name="Seiler S."/>
            <person name="Dunlap J.C."/>
            <person name="Radford A."/>
            <person name="Aramayo R."/>
            <person name="Natvig D.O."/>
            <person name="Alex L.A."/>
            <person name="Mannhaupt G."/>
            <person name="Ebbole D.J."/>
            <person name="Freitag M."/>
            <person name="Paulsen I."/>
            <person name="Sachs M.S."/>
            <person name="Lander E.S."/>
            <person name="Nusbaum C."/>
            <person name="Birren B.W."/>
        </authorList>
    </citation>
    <scope>NUCLEOTIDE SEQUENCE [LARGE SCALE GENOMIC DNA]</scope>
    <source>
        <strain>ATCC 24698 / 74-OR23-1A / CBS 708.71 / DSM 1257 / FGSC 987</strain>
    </source>
</reference>
<reference evidence="5" key="2">
    <citation type="journal article" date="2021" name="Proc. Natl. Acad. Sci. U.S.A.">
        <title>Structure of the translating Neurospora ribosome arrested by cycloheximide.</title>
        <authorList>
            <person name="Shen L."/>
            <person name="Su Z."/>
            <person name="Yang K."/>
            <person name="Wu C."/>
            <person name="Becker T."/>
            <person name="Bell-Pedersen D."/>
            <person name="Zhang J."/>
            <person name="Sachs M.S."/>
        </authorList>
    </citation>
    <scope>STRUCTURE BY ELECTRON MICROSCOPY (2.70 ANGSTROMS)</scope>
</reference>
<keyword id="KW-0002">3D-structure</keyword>
<keyword id="KW-0963">Cytoplasm</keyword>
<keyword id="KW-1185">Reference proteome</keyword>
<keyword id="KW-0687">Ribonucleoprotein</keyword>
<keyword id="KW-0689">Ribosomal protein</keyword>
<dbReference type="EMBL" id="CM002240">
    <property type="protein sequence ID" value="EAA31549.1"/>
    <property type="molecule type" value="Genomic_DNA"/>
</dbReference>
<dbReference type="RefSeq" id="XP_960785.1">
    <property type="nucleotide sequence ID" value="XM_955692.3"/>
</dbReference>
<dbReference type="PDB" id="7R81">
    <property type="method" value="EM"/>
    <property type="resolution" value="2.70 A"/>
    <property type="chains" value="e1=1-109"/>
</dbReference>
<dbReference type="PDBsum" id="7R81"/>
<dbReference type="EMDB" id="EMD-24307"/>
<dbReference type="SMR" id="Q7S7F1"/>
<dbReference type="FunCoup" id="Q7S7F1">
    <property type="interactions" value="1129"/>
</dbReference>
<dbReference type="STRING" id="367110.Q7S7F1"/>
<dbReference type="PaxDb" id="5141-EFNCRP00000008080"/>
<dbReference type="EnsemblFungi" id="EAA31549">
    <property type="protein sequence ID" value="EAA31549"/>
    <property type="gene ID" value="NCU08963"/>
</dbReference>
<dbReference type="GeneID" id="3876935"/>
<dbReference type="KEGG" id="ncr:NCU08963"/>
<dbReference type="VEuPathDB" id="FungiDB:NCU08963"/>
<dbReference type="HOGENOM" id="CLU_130502_0_1_1"/>
<dbReference type="InParanoid" id="Q7S7F1"/>
<dbReference type="OMA" id="YFQGGNN"/>
<dbReference type="OrthoDB" id="1928736at2759"/>
<dbReference type="Proteomes" id="UP000001805">
    <property type="component" value="Chromosome 2, Linkage Group V"/>
</dbReference>
<dbReference type="GO" id="GO:0022625">
    <property type="term" value="C:cytosolic large ribosomal subunit"/>
    <property type="evidence" value="ECO:0000318"/>
    <property type="project" value="GO_Central"/>
</dbReference>
<dbReference type="GO" id="GO:0030627">
    <property type="term" value="F:pre-mRNA 5'-splice site binding"/>
    <property type="evidence" value="ECO:0007669"/>
    <property type="project" value="EnsemblFungi"/>
</dbReference>
<dbReference type="GO" id="GO:0003723">
    <property type="term" value="F:RNA binding"/>
    <property type="evidence" value="ECO:0000318"/>
    <property type="project" value="GO_Central"/>
</dbReference>
<dbReference type="GO" id="GO:0003735">
    <property type="term" value="F:structural constituent of ribosome"/>
    <property type="evidence" value="ECO:0000318"/>
    <property type="project" value="GO_Central"/>
</dbReference>
<dbReference type="GO" id="GO:0048025">
    <property type="term" value="P:negative regulation of mRNA splicing, via spliceosome"/>
    <property type="evidence" value="ECO:0007669"/>
    <property type="project" value="EnsemblFungi"/>
</dbReference>
<dbReference type="GO" id="GO:0006364">
    <property type="term" value="P:rRNA processing"/>
    <property type="evidence" value="ECO:0007669"/>
    <property type="project" value="EnsemblFungi"/>
</dbReference>
<dbReference type="FunFam" id="3.30.1330.30:FF:000001">
    <property type="entry name" value="60S ribosomal protein L30"/>
    <property type="match status" value="1"/>
</dbReference>
<dbReference type="Gene3D" id="3.30.1330.30">
    <property type="match status" value="1"/>
</dbReference>
<dbReference type="HAMAP" id="MF_00481">
    <property type="entry name" value="Ribosomal_eL30"/>
    <property type="match status" value="1"/>
</dbReference>
<dbReference type="InterPro" id="IPR000231">
    <property type="entry name" value="Ribosomal_eL30"/>
</dbReference>
<dbReference type="InterPro" id="IPR039109">
    <property type="entry name" value="Ribosomal_eL30-like"/>
</dbReference>
<dbReference type="InterPro" id="IPR029064">
    <property type="entry name" value="Ribosomal_eL30-like_sf"/>
</dbReference>
<dbReference type="InterPro" id="IPR022991">
    <property type="entry name" value="Ribosomal_eL30_CS"/>
</dbReference>
<dbReference type="InterPro" id="IPR004038">
    <property type="entry name" value="Ribosomal_eL8/eL30/eS12/Gad45"/>
</dbReference>
<dbReference type="NCBIfam" id="NF002172">
    <property type="entry name" value="PRK01018.1"/>
    <property type="match status" value="1"/>
</dbReference>
<dbReference type="PANTHER" id="PTHR11449">
    <property type="entry name" value="RIBOSOMAL PROTEIN L30"/>
    <property type="match status" value="1"/>
</dbReference>
<dbReference type="Pfam" id="PF01248">
    <property type="entry name" value="Ribosomal_L7Ae"/>
    <property type="match status" value="1"/>
</dbReference>
<dbReference type="SUPFAM" id="SSF55315">
    <property type="entry name" value="L30e-like"/>
    <property type="match status" value="1"/>
</dbReference>
<dbReference type="PROSITE" id="PS00709">
    <property type="entry name" value="RIBOSOMAL_L30E_1"/>
    <property type="match status" value="1"/>
</dbReference>
<dbReference type="PROSITE" id="PS00993">
    <property type="entry name" value="RIBOSOMAL_L30E_2"/>
    <property type="match status" value="1"/>
</dbReference>
<accession>Q7S7F1</accession>
<organism>
    <name type="scientific">Neurospora crassa (strain ATCC 24698 / 74-OR23-1A / CBS 708.71 / DSM 1257 / FGSC 987)</name>
    <dbReference type="NCBI Taxonomy" id="367110"/>
    <lineage>
        <taxon>Eukaryota</taxon>
        <taxon>Fungi</taxon>
        <taxon>Dikarya</taxon>
        <taxon>Ascomycota</taxon>
        <taxon>Pezizomycotina</taxon>
        <taxon>Sordariomycetes</taxon>
        <taxon>Sordariomycetidae</taxon>
        <taxon>Sordariales</taxon>
        <taxon>Sordariaceae</taxon>
        <taxon>Neurospora</taxon>
    </lineage>
</organism>
<gene>
    <name type="primary">rpl-30</name>
    <name type="ORF">NCU08963</name>
</gene>
<sequence>MAPKKSKSDAQSIGAKLALVIKSGKVVLGYRSTLKALRSGKAKLILISANTPPLRKSELEYYSMMSKTAVHHYTGTNIELGTACGKLFRCSTMAILDAGDSDILADQQQ</sequence>
<proteinExistence type="evidence at protein level"/>
<comment type="function">
    <text evidence="4">Component of the ribosome, a large ribonucleoprotein complex responsible for the synthesis of proteins in the cell. The small ribosomal subunit (SSU) binds messenger RNAs (mRNAs) and translates the encoded message by selecting cognate aminoacyl-transfer RNA (tRNA) molecules. The large subunit (LSU) contains the ribosomal catalytic site termed the peptidyl transferase center (PTC), which catalyzes the formation of peptide bonds, thereby polymerizing the amino acids delivered by tRNAs into a polypeptide chain. The nascent polypeptides leave the ribosome through a tunnel in the LSU and interact with protein factors that function in enzymatic processing, targeting, and the membrane insertion of nascent chains at the exit of the ribosomal tunnel.</text>
</comment>
<comment type="subunit">
    <text evidence="1">Component of the large ribosomal subunit (LSU). Mature N.crassa ribosomes consist of a small (40S) and a large (60S) subunit. The 40S small subunit contains 1 molecule of ribosomal RNA (18S rRNA) and at least 32 different proteins. The large 60S subunit contains 3 rRNA molecules (26S, 5.8S and 5S rRNA) and at least 42 different proteins.</text>
</comment>
<comment type="subcellular location">
    <subcellularLocation>
        <location evidence="1">Cytoplasm</location>
    </subcellularLocation>
</comment>
<comment type="similarity">
    <text evidence="3">Belongs to the eukaryotic ribosomal protein eL30 family.</text>
</comment>
<evidence type="ECO:0000269" key="1">
    <source>
    </source>
</evidence>
<evidence type="ECO:0000303" key="2">
    <source>
    </source>
</evidence>
<evidence type="ECO:0000305" key="3"/>
<evidence type="ECO:0000305" key="4">
    <source>
    </source>
</evidence>
<evidence type="ECO:0007744" key="5">
    <source>
        <dbReference type="PDB" id="7R81"/>
    </source>
</evidence>
<feature type="chain" id="PRO_0000146139" description="Large ribosomal subunit protein eL30">
    <location>
        <begin position="1"/>
        <end position="109"/>
    </location>
</feature>
<protein>
    <recommendedName>
        <fullName evidence="2">Large ribosomal subunit protein eL30</fullName>
    </recommendedName>
    <alternativeName>
        <fullName>60S ribosomal protein L30</fullName>
    </alternativeName>
</protein>